<sequence length="122" mass="13524">MIQMQSYLDVADNSGAKEVMCIKVLGGSKRRYAHIGDIIKVTVKDAIPRGKVKKGEVYDAVVVRTRKGVRRPDGSLIRFDGNAAVLLNNKQEPIGTRIFGPVTRELRSEKFMKIVSLAPEVL</sequence>
<gene>
    <name evidence="1" type="primary">rplN</name>
    <name type="ordered locus">XCC0905</name>
</gene>
<dbReference type="EMBL" id="AE008922">
    <property type="protein sequence ID" value="AAM40215.1"/>
    <property type="molecule type" value="Genomic_DNA"/>
</dbReference>
<dbReference type="RefSeq" id="NP_636291.1">
    <property type="nucleotide sequence ID" value="NC_003902.1"/>
</dbReference>
<dbReference type="RefSeq" id="WP_003486699.1">
    <property type="nucleotide sequence ID" value="NC_003902.1"/>
</dbReference>
<dbReference type="SMR" id="Q7CLU5"/>
<dbReference type="STRING" id="190485.XCC0905"/>
<dbReference type="EnsemblBacteria" id="AAM40215">
    <property type="protein sequence ID" value="AAM40215"/>
    <property type="gene ID" value="XCC0905"/>
</dbReference>
<dbReference type="GeneID" id="97509346"/>
<dbReference type="KEGG" id="xcc:XCC0905"/>
<dbReference type="PATRIC" id="fig|190485.4.peg.977"/>
<dbReference type="eggNOG" id="COG0093">
    <property type="taxonomic scope" value="Bacteria"/>
</dbReference>
<dbReference type="HOGENOM" id="CLU_095071_2_1_6"/>
<dbReference type="OrthoDB" id="9806379at2"/>
<dbReference type="PRO" id="PR:Q7CLU5"/>
<dbReference type="Proteomes" id="UP000001010">
    <property type="component" value="Chromosome"/>
</dbReference>
<dbReference type="GO" id="GO:0022625">
    <property type="term" value="C:cytosolic large ribosomal subunit"/>
    <property type="evidence" value="ECO:0000318"/>
    <property type="project" value="GO_Central"/>
</dbReference>
<dbReference type="GO" id="GO:0070180">
    <property type="term" value="F:large ribosomal subunit rRNA binding"/>
    <property type="evidence" value="ECO:0000318"/>
    <property type="project" value="GO_Central"/>
</dbReference>
<dbReference type="GO" id="GO:0003735">
    <property type="term" value="F:structural constituent of ribosome"/>
    <property type="evidence" value="ECO:0000318"/>
    <property type="project" value="GO_Central"/>
</dbReference>
<dbReference type="GO" id="GO:0006412">
    <property type="term" value="P:translation"/>
    <property type="evidence" value="ECO:0007669"/>
    <property type="project" value="UniProtKB-UniRule"/>
</dbReference>
<dbReference type="CDD" id="cd00337">
    <property type="entry name" value="Ribosomal_uL14"/>
    <property type="match status" value="1"/>
</dbReference>
<dbReference type="FunFam" id="2.40.150.20:FF:000001">
    <property type="entry name" value="50S ribosomal protein L14"/>
    <property type="match status" value="1"/>
</dbReference>
<dbReference type="Gene3D" id="2.40.150.20">
    <property type="entry name" value="Ribosomal protein L14"/>
    <property type="match status" value="1"/>
</dbReference>
<dbReference type="HAMAP" id="MF_01367">
    <property type="entry name" value="Ribosomal_uL14"/>
    <property type="match status" value="1"/>
</dbReference>
<dbReference type="InterPro" id="IPR000218">
    <property type="entry name" value="Ribosomal_uL14"/>
</dbReference>
<dbReference type="InterPro" id="IPR005745">
    <property type="entry name" value="Ribosomal_uL14_bac-type"/>
</dbReference>
<dbReference type="InterPro" id="IPR019972">
    <property type="entry name" value="Ribosomal_uL14_CS"/>
</dbReference>
<dbReference type="InterPro" id="IPR036853">
    <property type="entry name" value="Ribosomal_uL14_sf"/>
</dbReference>
<dbReference type="NCBIfam" id="TIGR01067">
    <property type="entry name" value="rplN_bact"/>
    <property type="match status" value="1"/>
</dbReference>
<dbReference type="PANTHER" id="PTHR11761">
    <property type="entry name" value="50S/60S RIBOSOMAL PROTEIN L14/L23"/>
    <property type="match status" value="1"/>
</dbReference>
<dbReference type="PANTHER" id="PTHR11761:SF3">
    <property type="entry name" value="LARGE RIBOSOMAL SUBUNIT PROTEIN UL14M"/>
    <property type="match status" value="1"/>
</dbReference>
<dbReference type="Pfam" id="PF00238">
    <property type="entry name" value="Ribosomal_L14"/>
    <property type="match status" value="1"/>
</dbReference>
<dbReference type="SMART" id="SM01374">
    <property type="entry name" value="Ribosomal_L14"/>
    <property type="match status" value="1"/>
</dbReference>
<dbReference type="SUPFAM" id="SSF50193">
    <property type="entry name" value="Ribosomal protein L14"/>
    <property type="match status" value="1"/>
</dbReference>
<dbReference type="PROSITE" id="PS00049">
    <property type="entry name" value="RIBOSOMAL_L14"/>
    <property type="match status" value="1"/>
</dbReference>
<name>RL14_XANCP</name>
<accession>Q7CLU5</accession>
<feature type="chain" id="PRO_0000266584" description="Large ribosomal subunit protein uL14">
    <location>
        <begin position="1"/>
        <end position="122"/>
    </location>
</feature>
<protein>
    <recommendedName>
        <fullName evidence="1">Large ribosomal subunit protein uL14</fullName>
    </recommendedName>
    <alternativeName>
        <fullName evidence="2">50S ribosomal protein L14</fullName>
    </alternativeName>
</protein>
<keyword id="KW-1185">Reference proteome</keyword>
<keyword id="KW-0687">Ribonucleoprotein</keyword>
<keyword id="KW-0689">Ribosomal protein</keyword>
<keyword id="KW-0694">RNA-binding</keyword>
<keyword id="KW-0699">rRNA-binding</keyword>
<comment type="function">
    <text evidence="1">Binds to 23S rRNA. Forms part of two intersubunit bridges in the 70S ribosome.</text>
</comment>
<comment type="subunit">
    <text evidence="1">Part of the 50S ribosomal subunit. Forms a cluster with proteins L3 and L19. In the 70S ribosome, L14 and L19 interact and together make contacts with the 16S rRNA in bridges B5 and B8.</text>
</comment>
<comment type="similarity">
    <text evidence="1">Belongs to the universal ribosomal protein uL14 family.</text>
</comment>
<organism>
    <name type="scientific">Xanthomonas campestris pv. campestris (strain ATCC 33913 / DSM 3586 / NCPPB 528 / LMG 568 / P 25)</name>
    <dbReference type="NCBI Taxonomy" id="190485"/>
    <lineage>
        <taxon>Bacteria</taxon>
        <taxon>Pseudomonadati</taxon>
        <taxon>Pseudomonadota</taxon>
        <taxon>Gammaproteobacteria</taxon>
        <taxon>Lysobacterales</taxon>
        <taxon>Lysobacteraceae</taxon>
        <taxon>Xanthomonas</taxon>
    </lineage>
</organism>
<proteinExistence type="inferred from homology"/>
<evidence type="ECO:0000255" key="1">
    <source>
        <dbReference type="HAMAP-Rule" id="MF_01367"/>
    </source>
</evidence>
<evidence type="ECO:0000305" key="2"/>
<reference key="1">
    <citation type="journal article" date="2002" name="Nature">
        <title>Comparison of the genomes of two Xanthomonas pathogens with differing host specificities.</title>
        <authorList>
            <person name="da Silva A.C.R."/>
            <person name="Ferro J.A."/>
            <person name="Reinach F.C."/>
            <person name="Farah C.S."/>
            <person name="Furlan L.R."/>
            <person name="Quaggio R.B."/>
            <person name="Monteiro-Vitorello C.B."/>
            <person name="Van Sluys M.A."/>
            <person name="Almeida N.F. Jr."/>
            <person name="Alves L.M.C."/>
            <person name="do Amaral A.M."/>
            <person name="Bertolini M.C."/>
            <person name="Camargo L.E.A."/>
            <person name="Camarotte G."/>
            <person name="Cannavan F."/>
            <person name="Cardozo J."/>
            <person name="Chambergo F."/>
            <person name="Ciapina L.P."/>
            <person name="Cicarelli R.M.B."/>
            <person name="Coutinho L.L."/>
            <person name="Cursino-Santos J.R."/>
            <person name="El-Dorry H."/>
            <person name="Faria J.B."/>
            <person name="Ferreira A.J.S."/>
            <person name="Ferreira R.C.C."/>
            <person name="Ferro M.I.T."/>
            <person name="Formighieri E.F."/>
            <person name="Franco M.C."/>
            <person name="Greggio C.C."/>
            <person name="Gruber A."/>
            <person name="Katsuyama A.M."/>
            <person name="Kishi L.T."/>
            <person name="Leite R.P."/>
            <person name="Lemos E.G.M."/>
            <person name="Lemos M.V.F."/>
            <person name="Locali E.C."/>
            <person name="Machado M.A."/>
            <person name="Madeira A.M.B.N."/>
            <person name="Martinez-Rossi N.M."/>
            <person name="Martins E.C."/>
            <person name="Meidanis J."/>
            <person name="Menck C.F.M."/>
            <person name="Miyaki C.Y."/>
            <person name="Moon D.H."/>
            <person name="Moreira L.M."/>
            <person name="Novo M.T.M."/>
            <person name="Okura V.K."/>
            <person name="Oliveira M.C."/>
            <person name="Oliveira V.R."/>
            <person name="Pereira H.A."/>
            <person name="Rossi A."/>
            <person name="Sena J.A.D."/>
            <person name="Silva C."/>
            <person name="de Souza R.F."/>
            <person name="Spinola L.A.F."/>
            <person name="Takita M.A."/>
            <person name="Tamura R.E."/>
            <person name="Teixeira E.C."/>
            <person name="Tezza R.I.D."/>
            <person name="Trindade dos Santos M."/>
            <person name="Truffi D."/>
            <person name="Tsai S.M."/>
            <person name="White F.F."/>
            <person name="Setubal J.C."/>
            <person name="Kitajima J.P."/>
        </authorList>
    </citation>
    <scope>NUCLEOTIDE SEQUENCE [LARGE SCALE GENOMIC DNA]</scope>
    <source>
        <strain>ATCC 33913 / DSM 3586 / NCPPB 528 / LMG 568 / P 25</strain>
    </source>
</reference>